<sequence length="88" mass="10227">MITKEQKAQIVAKYGANKKDTGNIFVQIAILTAEIEDLKPHFLANPKDNHSRRGFIAKITKRRILLQHLKKENFELYNKVLAELNLRK</sequence>
<keyword id="KW-1185">Reference proteome</keyword>
<keyword id="KW-0687">Ribonucleoprotein</keyword>
<keyword id="KW-0689">Ribosomal protein</keyword>
<keyword id="KW-0694">RNA-binding</keyword>
<keyword id="KW-0699">rRNA-binding</keyword>
<feature type="chain" id="PRO_0000354205" description="Small ribosomal subunit protein uS15">
    <location>
        <begin position="1"/>
        <end position="88"/>
    </location>
</feature>
<name>RS15_MYCAP</name>
<proteinExistence type="inferred from homology"/>
<evidence type="ECO:0000255" key="1">
    <source>
        <dbReference type="HAMAP-Rule" id="MF_01343"/>
    </source>
</evidence>
<evidence type="ECO:0000305" key="2"/>
<gene>
    <name evidence="1" type="primary">rpsO</name>
    <name type="ordered locus">MAG2290</name>
</gene>
<accession>A5IY18</accession>
<comment type="function">
    <text evidence="1">One of the primary rRNA binding proteins, it binds directly to 16S rRNA where it helps nucleate assembly of the platform of the 30S subunit by binding and bridging several RNA helices of the 16S rRNA.</text>
</comment>
<comment type="function">
    <text evidence="1">Forms an intersubunit bridge (bridge B4) with the 23S rRNA of the 50S subunit in the ribosome.</text>
</comment>
<comment type="subunit">
    <text evidence="1">Part of the 30S ribosomal subunit. Forms a bridge to the 50S subunit in the 70S ribosome, contacting the 23S rRNA.</text>
</comment>
<comment type="similarity">
    <text evidence="1">Belongs to the universal ribosomal protein uS15 family.</text>
</comment>
<organism>
    <name type="scientific">Mycoplasmopsis agalactiae (strain NCTC 10123 / CIP 59.7 / PG2)</name>
    <name type="common">Mycoplasma agalactiae</name>
    <dbReference type="NCBI Taxonomy" id="347257"/>
    <lineage>
        <taxon>Bacteria</taxon>
        <taxon>Bacillati</taxon>
        <taxon>Mycoplasmatota</taxon>
        <taxon>Mycoplasmoidales</taxon>
        <taxon>Metamycoplasmataceae</taxon>
        <taxon>Mycoplasmopsis</taxon>
    </lineage>
</organism>
<protein>
    <recommendedName>
        <fullName evidence="1">Small ribosomal subunit protein uS15</fullName>
    </recommendedName>
    <alternativeName>
        <fullName evidence="2">30S ribosomal protein S15</fullName>
    </alternativeName>
</protein>
<reference key="1">
    <citation type="journal article" date="2007" name="PLoS Genet.">
        <title>Being pathogenic, plastic, and sexual while living with a nearly minimal bacterial genome.</title>
        <authorList>
            <person name="Sirand-Pugnet P."/>
            <person name="Lartigue C."/>
            <person name="Marenda M."/>
            <person name="Jacob D."/>
            <person name="Barre A."/>
            <person name="Barbe V."/>
            <person name="Schenowitz C."/>
            <person name="Mangenot S."/>
            <person name="Couloux A."/>
            <person name="Segurens B."/>
            <person name="de Daruvar A."/>
            <person name="Blanchard A."/>
            <person name="Citti C."/>
        </authorList>
    </citation>
    <scope>NUCLEOTIDE SEQUENCE [LARGE SCALE GENOMIC DNA]</scope>
    <source>
        <strain>NCTC 10123 / CIP 59.7 / PG2</strain>
    </source>
</reference>
<dbReference type="EMBL" id="CU179680">
    <property type="protein sequence ID" value="CAL58927.1"/>
    <property type="molecule type" value="Genomic_DNA"/>
</dbReference>
<dbReference type="RefSeq" id="WP_004024390.1">
    <property type="nucleotide sequence ID" value="NC_009497.1"/>
</dbReference>
<dbReference type="SMR" id="A5IY18"/>
<dbReference type="STRING" id="347257.MAG2290"/>
<dbReference type="GeneID" id="93357996"/>
<dbReference type="KEGG" id="maa:MAG2290"/>
<dbReference type="HOGENOM" id="CLU_148518_1_0_14"/>
<dbReference type="Proteomes" id="UP000007065">
    <property type="component" value="Chromosome"/>
</dbReference>
<dbReference type="GO" id="GO:0022627">
    <property type="term" value="C:cytosolic small ribosomal subunit"/>
    <property type="evidence" value="ECO:0007669"/>
    <property type="project" value="TreeGrafter"/>
</dbReference>
<dbReference type="GO" id="GO:0019843">
    <property type="term" value="F:rRNA binding"/>
    <property type="evidence" value="ECO:0007669"/>
    <property type="project" value="UniProtKB-UniRule"/>
</dbReference>
<dbReference type="GO" id="GO:0003735">
    <property type="term" value="F:structural constituent of ribosome"/>
    <property type="evidence" value="ECO:0007669"/>
    <property type="project" value="InterPro"/>
</dbReference>
<dbReference type="GO" id="GO:0006412">
    <property type="term" value="P:translation"/>
    <property type="evidence" value="ECO:0007669"/>
    <property type="project" value="UniProtKB-UniRule"/>
</dbReference>
<dbReference type="CDD" id="cd00353">
    <property type="entry name" value="Ribosomal_S15p_S13e"/>
    <property type="match status" value="1"/>
</dbReference>
<dbReference type="Gene3D" id="6.10.250.3130">
    <property type="match status" value="1"/>
</dbReference>
<dbReference type="Gene3D" id="1.10.287.10">
    <property type="entry name" value="S15/NS1, RNA-binding"/>
    <property type="match status" value="1"/>
</dbReference>
<dbReference type="HAMAP" id="MF_01343_B">
    <property type="entry name" value="Ribosomal_uS15_B"/>
    <property type="match status" value="1"/>
</dbReference>
<dbReference type="InterPro" id="IPR000589">
    <property type="entry name" value="Ribosomal_uS15"/>
</dbReference>
<dbReference type="InterPro" id="IPR005290">
    <property type="entry name" value="Ribosomal_uS15_bac-type"/>
</dbReference>
<dbReference type="InterPro" id="IPR009068">
    <property type="entry name" value="uS15_NS1_RNA-bd_sf"/>
</dbReference>
<dbReference type="NCBIfam" id="TIGR00952">
    <property type="entry name" value="S15_bact"/>
    <property type="match status" value="1"/>
</dbReference>
<dbReference type="PANTHER" id="PTHR23321">
    <property type="entry name" value="RIBOSOMAL PROTEIN S15, BACTERIAL AND ORGANELLAR"/>
    <property type="match status" value="1"/>
</dbReference>
<dbReference type="PANTHER" id="PTHR23321:SF26">
    <property type="entry name" value="SMALL RIBOSOMAL SUBUNIT PROTEIN US15M"/>
    <property type="match status" value="1"/>
</dbReference>
<dbReference type="Pfam" id="PF00312">
    <property type="entry name" value="Ribosomal_S15"/>
    <property type="match status" value="1"/>
</dbReference>
<dbReference type="SMART" id="SM01387">
    <property type="entry name" value="Ribosomal_S15"/>
    <property type="match status" value="1"/>
</dbReference>
<dbReference type="SUPFAM" id="SSF47060">
    <property type="entry name" value="S15/NS1 RNA-binding domain"/>
    <property type="match status" value="1"/>
</dbReference>